<keyword id="KW-0067">ATP-binding</keyword>
<keyword id="KW-0963">Cytoplasm</keyword>
<keyword id="KW-0324">Glycolysis</keyword>
<keyword id="KW-0418">Kinase</keyword>
<keyword id="KW-0460">Magnesium</keyword>
<keyword id="KW-0479">Metal-binding</keyword>
<keyword id="KW-0547">Nucleotide-binding</keyword>
<keyword id="KW-0630">Potassium</keyword>
<keyword id="KW-0670">Pyruvate</keyword>
<keyword id="KW-1185">Reference proteome</keyword>
<keyword id="KW-0808">Transferase</keyword>
<organism>
    <name type="scientific">Oryza sativa subsp. japonica</name>
    <name type="common">Rice</name>
    <dbReference type="NCBI Taxonomy" id="39947"/>
    <lineage>
        <taxon>Eukaryota</taxon>
        <taxon>Viridiplantae</taxon>
        <taxon>Streptophyta</taxon>
        <taxon>Embryophyta</taxon>
        <taxon>Tracheophyta</taxon>
        <taxon>Spermatophyta</taxon>
        <taxon>Magnoliopsida</taxon>
        <taxon>Liliopsida</taxon>
        <taxon>Poales</taxon>
        <taxon>Poaceae</taxon>
        <taxon>BOP clade</taxon>
        <taxon>Oryzoideae</taxon>
        <taxon>Oryzeae</taxon>
        <taxon>Oryzinae</taxon>
        <taxon>Oryza</taxon>
        <taxon>Oryza sativa</taxon>
    </lineage>
</organism>
<comment type="function">
    <text evidence="4">Key regulatory enzyme of the glycolytic pathway that catalyzes the final step of glycolysis, converting ADP and phosphoenolpyruvate (PEP) to ATP and pyruvate by essentially irreversible transphosphorylation.</text>
</comment>
<comment type="catalytic activity">
    <reaction evidence="6">
        <text>pyruvate + ATP = phosphoenolpyruvate + ADP + H(+)</text>
        <dbReference type="Rhea" id="RHEA:18157"/>
        <dbReference type="ChEBI" id="CHEBI:15361"/>
        <dbReference type="ChEBI" id="CHEBI:15378"/>
        <dbReference type="ChEBI" id="CHEBI:30616"/>
        <dbReference type="ChEBI" id="CHEBI:58702"/>
        <dbReference type="ChEBI" id="CHEBI:456216"/>
        <dbReference type="EC" id="2.7.1.40"/>
    </reaction>
</comment>
<comment type="cofactor">
    <cofactor evidence="5">
        <name>Mg(2+)</name>
        <dbReference type="ChEBI" id="CHEBI:18420"/>
    </cofactor>
</comment>
<comment type="cofactor">
    <cofactor evidence="5">
        <name>K(+)</name>
        <dbReference type="ChEBI" id="CHEBI:29103"/>
    </cofactor>
</comment>
<comment type="pathway">
    <text evidence="6">Carbohydrate degradation; glycolysis; pyruvate from D-glyceraldehyde 3-phosphate: step 5/5.</text>
</comment>
<comment type="subunit">
    <text evidence="3">Homotetramer.</text>
</comment>
<comment type="subcellular location">
    <subcellularLocation>
        <location evidence="4">Cytoplasm</location>
        <location evidence="4">Cytosol</location>
    </subcellularLocation>
</comment>
<comment type="similarity">
    <text evidence="6">Belongs to the pyruvate kinase family.</text>
</comment>
<feature type="chain" id="PRO_0000433957" description="Pyruvate kinase 2, cytosolic">
    <location>
        <begin position="1"/>
        <end position="527"/>
    </location>
</feature>
<feature type="binding site" evidence="3">
    <location>
        <position position="58"/>
    </location>
    <ligand>
        <name>substrate</name>
    </ligand>
</feature>
<feature type="binding site" evidence="2">
    <location>
        <begin position="60"/>
        <end position="63"/>
    </location>
    <ligand>
        <name>ATP</name>
        <dbReference type="ChEBI" id="CHEBI:30616"/>
    </ligand>
</feature>
<feature type="binding site" evidence="3">
    <location>
        <position position="60"/>
    </location>
    <ligand>
        <name>K(+)</name>
        <dbReference type="ChEBI" id="CHEBI:29103"/>
    </ligand>
</feature>
<feature type="binding site" evidence="3">
    <location>
        <position position="62"/>
    </location>
    <ligand>
        <name>K(+)</name>
        <dbReference type="ChEBI" id="CHEBI:29103"/>
    </ligand>
</feature>
<feature type="binding site" evidence="3">
    <location>
        <position position="92"/>
    </location>
    <ligand>
        <name>K(+)</name>
        <dbReference type="ChEBI" id="CHEBI:29103"/>
    </ligand>
</feature>
<feature type="binding site" evidence="3">
    <location>
        <position position="93"/>
    </location>
    <ligand>
        <name>K(+)</name>
        <dbReference type="ChEBI" id="CHEBI:29103"/>
    </ligand>
</feature>
<feature type="binding site" evidence="3">
    <location>
        <position position="256"/>
    </location>
    <ligand>
        <name>substrate</name>
    </ligand>
</feature>
<feature type="binding site" evidence="2">
    <location>
        <position position="258"/>
    </location>
    <ligand>
        <name>Mg(2+)</name>
        <dbReference type="ChEBI" id="CHEBI:18420"/>
    </ligand>
</feature>
<feature type="binding site" evidence="3">
    <location>
        <position position="281"/>
    </location>
    <ligand>
        <name>substrate</name>
    </ligand>
</feature>
<feature type="binding site" evidence="2">
    <location>
        <position position="282"/>
    </location>
    <ligand>
        <name>Mg(2+)</name>
        <dbReference type="ChEBI" id="CHEBI:18420"/>
    </ligand>
</feature>
<feature type="binding site" evidence="3">
    <location>
        <position position="282"/>
    </location>
    <ligand>
        <name>substrate</name>
    </ligand>
</feature>
<feature type="binding site" evidence="3">
    <location>
        <position position="313"/>
    </location>
    <ligand>
        <name>substrate</name>
    </ligand>
</feature>
<feature type="site" description="Transition state stabilizer" evidence="1">
    <location>
        <position position="256"/>
    </location>
</feature>
<dbReference type="EC" id="2.7.1.40" evidence="6"/>
<dbReference type="EMBL" id="DP000011">
    <property type="protein sequence ID" value="ABA96474.1"/>
    <property type="molecule type" value="Genomic_DNA"/>
</dbReference>
<dbReference type="EMBL" id="AP008218">
    <property type="protein sequence ID" value="BAF29167.1"/>
    <property type="molecule type" value="Genomic_DNA"/>
</dbReference>
<dbReference type="EMBL" id="AP014968">
    <property type="protein sequence ID" value="BAT15880.1"/>
    <property type="molecule type" value="Genomic_DNA"/>
</dbReference>
<dbReference type="EMBL" id="CM000149">
    <property type="protein sequence ID" value="EEE52764.1"/>
    <property type="molecule type" value="Genomic_DNA"/>
</dbReference>
<dbReference type="EMBL" id="AK071391">
    <property type="protein sequence ID" value="BAG92472.1"/>
    <property type="molecule type" value="mRNA"/>
</dbReference>
<dbReference type="RefSeq" id="XP_015620584.1">
    <property type="nucleotide sequence ID" value="XM_015765098.1"/>
</dbReference>
<dbReference type="SMR" id="Q2QXR8"/>
<dbReference type="FunCoup" id="Q2QXR8">
    <property type="interactions" value="659"/>
</dbReference>
<dbReference type="STRING" id="39947.Q2QXR8"/>
<dbReference type="PaxDb" id="39947-Q2QXR8"/>
<dbReference type="EnsemblPlants" id="Os12t0145700-01">
    <property type="protein sequence ID" value="Os12t0145700-01"/>
    <property type="gene ID" value="Os12g0145700"/>
</dbReference>
<dbReference type="Gramene" id="Os12t0145700-01">
    <property type="protein sequence ID" value="Os12t0145700-01"/>
    <property type="gene ID" value="Os12g0145700"/>
</dbReference>
<dbReference type="KEGG" id="dosa:Os12g0145700"/>
<dbReference type="eggNOG" id="KOG2323">
    <property type="taxonomic scope" value="Eukaryota"/>
</dbReference>
<dbReference type="HOGENOM" id="CLU_015439_9_1_1"/>
<dbReference type="InParanoid" id="Q2QXR8"/>
<dbReference type="OMA" id="AMSKPHR"/>
<dbReference type="OrthoDB" id="108365at2759"/>
<dbReference type="UniPathway" id="UPA00109">
    <property type="reaction ID" value="UER00188"/>
</dbReference>
<dbReference type="Proteomes" id="UP000000763">
    <property type="component" value="Chromosome 12"/>
</dbReference>
<dbReference type="Proteomes" id="UP000007752">
    <property type="component" value="Chromosome 12"/>
</dbReference>
<dbReference type="Proteomes" id="UP000059680">
    <property type="component" value="Chromosome 12"/>
</dbReference>
<dbReference type="GO" id="GO:0005737">
    <property type="term" value="C:cytoplasm"/>
    <property type="evidence" value="ECO:0000318"/>
    <property type="project" value="GO_Central"/>
</dbReference>
<dbReference type="GO" id="GO:0005829">
    <property type="term" value="C:cytosol"/>
    <property type="evidence" value="ECO:0007669"/>
    <property type="project" value="UniProtKB-SubCell"/>
</dbReference>
<dbReference type="GO" id="GO:0005524">
    <property type="term" value="F:ATP binding"/>
    <property type="evidence" value="ECO:0007669"/>
    <property type="project" value="UniProtKB-KW"/>
</dbReference>
<dbReference type="GO" id="GO:0016301">
    <property type="term" value="F:kinase activity"/>
    <property type="evidence" value="ECO:0007669"/>
    <property type="project" value="UniProtKB-KW"/>
</dbReference>
<dbReference type="GO" id="GO:0000287">
    <property type="term" value="F:magnesium ion binding"/>
    <property type="evidence" value="ECO:0007669"/>
    <property type="project" value="InterPro"/>
</dbReference>
<dbReference type="GO" id="GO:0030955">
    <property type="term" value="F:potassium ion binding"/>
    <property type="evidence" value="ECO:0007669"/>
    <property type="project" value="InterPro"/>
</dbReference>
<dbReference type="GO" id="GO:0004743">
    <property type="term" value="F:pyruvate kinase activity"/>
    <property type="evidence" value="ECO:0000318"/>
    <property type="project" value="GO_Central"/>
</dbReference>
<dbReference type="GO" id="GO:0006096">
    <property type="term" value="P:glycolytic process"/>
    <property type="evidence" value="ECO:0000318"/>
    <property type="project" value="GO_Central"/>
</dbReference>
<dbReference type="FunFam" id="2.40.33.10:FF:000004">
    <property type="entry name" value="Pyruvate kinase"/>
    <property type="match status" value="1"/>
</dbReference>
<dbReference type="FunFam" id="3.40.1380.20:FF:000006">
    <property type="entry name" value="Pyruvate kinase"/>
    <property type="match status" value="1"/>
</dbReference>
<dbReference type="Gene3D" id="3.20.20.60">
    <property type="entry name" value="Phosphoenolpyruvate-binding domains"/>
    <property type="match status" value="1"/>
</dbReference>
<dbReference type="Gene3D" id="2.40.33.10">
    <property type="entry name" value="PK beta-barrel domain-like"/>
    <property type="match status" value="1"/>
</dbReference>
<dbReference type="Gene3D" id="3.40.1380.20">
    <property type="entry name" value="Pyruvate kinase, C-terminal domain"/>
    <property type="match status" value="1"/>
</dbReference>
<dbReference type="InterPro" id="IPR001697">
    <property type="entry name" value="Pyr_Knase"/>
</dbReference>
<dbReference type="InterPro" id="IPR015813">
    <property type="entry name" value="Pyrv/PenolPyrv_kinase-like_dom"/>
</dbReference>
<dbReference type="InterPro" id="IPR040442">
    <property type="entry name" value="Pyrv_kinase-like_dom_sf"/>
</dbReference>
<dbReference type="InterPro" id="IPR011037">
    <property type="entry name" value="Pyrv_Knase-like_insert_dom_sf"/>
</dbReference>
<dbReference type="InterPro" id="IPR015793">
    <property type="entry name" value="Pyrv_Knase_brl"/>
</dbReference>
<dbReference type="InterPro" id="IPR015795">
    <property type="entry name" value="Pyrv_Knase_C"/>
</dbReference>
<dbReference type="InterPro" id="IPR036918">
    <property type="entry name" value="Pyrv_Knase_C_sf"/>
</dbReference>
<dbReference type="InterPro" id="IPR015806">
    <property type="entry name" value="Pyrv_Knase_insert_dom_sf"/>
</dbReference>
<dbReference type="NCBIfam" id="TIGR01064">
    <property type="entry name" value="pyruv_kin"/>
    <property type="match status" value="1"/>
</dbReference>
<dbReference type="PANTHER" id="PTHR11817">
    <property type="entry name" value="PYRUVATE KINASE"/>
    <property type="match status" value="1"/>
</dbReference>
<dbReference type="Pfam" id="PF00224">
    <property type="entry name" value="PK"/>
    <property type="match status" value="1"/>
</dbReference>
<dbReference type="Pfam" id="PF02887">
    <property type="entry name" value="PK_C"/>
    <property type="match status" value="1"/>
</dbReference>
<dbReference type="PRINTS" id="PR01050">
    <property type="entry name" value="PYRUVTKNASE"/>
</dbReference>
<dbReference type="SUPFAM" id="SSF51621">
    <property type="entry name" value="Phosphoenolpyruvate/pyruvate domain"/>
    <property type="match status" value="1"/>
</dbReference>
<dbReference type="SUPFAM" id="SSF50800">
    <property type="entry name" value="PK beta-barrel domain-like"/>
    <property type="match status" value="1"/>
</dbReference>
<dbReference type="SUPFAM" id="SSF52935">
    <property type="entry name" value="PK C-terminal domain-like"/>
    <property type="match status" value="1"/>
</dbReference>
<evidence type="ECO:0000250" key="1">
    <source>
        <dbReference type="UniProtKB" id="P00549"/>
    </source>
</evidence>
<evidence type="ECO:0000250" key="2">
    <source>
        <dbReference type="UniProtKB" id="P14618"/>
    </source>
</evidence>
<evidence type="ECO:0000250" key="3">
    <source>
        <dbReference type="UniProtKB" id="P30613"/>
    </source>
</evidence>
<evidence type="ECO:0000250" key="4">
    <source>
        <dbReference type="UniProtKB" id="Q2RAK2"/>
    </source>
</evidence>
<evidence type="ECO:0000250" key="5">
    <source>
        <dbReference type="UniProtKB" id="Q9LIK0"/>
    </source>
</evidence>
<evidence type="ECO:0000305" key="6"/>
<evidence type="ECO:0000312" key="7">
    <source>
        <dbReference type="EMBL" id="ABA96474.1"/>
    </source>
</evidence>
<evidence type="ECO:0000312" key="8">
    <source>
        <dbReference type="EMBL" id="BAF29167.1"/>
    </source>
</evidence>
<evidence type="ECO:0000312" key="9">
    <source>
        <dbReference type="EMBL" id="EEE52764.1"/>
    </source>
</evidence>
<proteinExistence type="evidence at transcript level"/>
<gene>
    <name evidence="8" type="ordered locus">Os12g0145700</name>
    <name evidence="7" type="ordered locus">LOC_Os12g05110</name>
    <name evidence="9" type="ORF">OsJ_35209</name>
</gene>
<accession>Q2QXR8</accession>
<accession>A0A0P0Y6Y6</accession>
<sequence>MHSTNLLLEEPIRMASILEPSKPSFFPAMTKIVGTLGPKSRSVDTISSCLKAGMSVARFDFSWGDAEYHQETLENLKVAIKSTKKLCAVMLDTVGPELQVVNKSEASISLEENGTVILTPDQGQEASSQVLPINFAGLAKAVKPGDTIFVGQYLFTGSETTSVWLEVSQIKGDDVVCVIKNTATLAGSLFTLHCSQIHIDLPTLSDEDKEVIRKWGAPNKIDFLSLSYTRHVEDVRQAREFLSKLGDLSQTQIFAKIENVEGLNNFDEILQEADGIILSRGNLGIDLPPEKVFLFQKSALHKCNMAGKPAVVTRVVDSMTDNLRPTRAEATDVANAVLDGSDAILLGAETLRGLYPVETISIVGKICAEAEKVFNQDLYFKRTVKHVGEPMTHLESIASSAVRAAIKVKASVIICFTSSGRAARLIAKYRPTMPVLSVVIPRLKTNQLRWSFTGAFEARQSLIVRGLFPMLADPRHPAESTNATNESVLKVALDHGKVSGVIKSHDRVVVCQKVGDSSVVKIIELDD</sequence>
<reference key="1">
    <citation type="journal article" date="2005" name="BMC Biol.">
        <title>The sequence of rice chromosomes 11 and 12, rich in disease resistance genes and recent gene duplications.</title>
        <authorList>
            <consortium name="The rice chromosomes 11 and 12 sequencing consortia"/>
        </authorList>
    </citation>
    <scope>NUCLEOTIDE SEQUENCE [LARGE SCALE GENOMIC DNA]</scope>
    <source>
        <strain>cv. Nipponbare</strain>
    </source>
</reference>
<reference key="2">
    <citation type="journal article" date="2005" name="Nature">
        <title>The map-based sequence of the rice genome.</title>
        <authorList>
            <consortium name="International rice genome sequencing project (IRGSP)"/>
        </authorList>
    </citation>
    <scope>NUCLEOTIDE SEQUENCE [LARGE SCALE GENOMIC DNA]</scope>
    <source>
        <strain>cv. Nipponbare</strain>
    </source>
</reference>
<reference key="3">
    <citation type="journal article" date="2008" name="Nucleic Acids Res.">
        <title>The rice annotation project database (RAP-DB): 2008 update.</title>
        <authorList>
            <consortium name="The rice annotation project (RAP)"/>
        </authorList>
    </citation>
    <scope>GENOME REANNOTATION</scope>
    <source>
        <strain>cv. Nipponbare</strain>
    </source>
</reference>
<reference key="4">
    <citation type="journal article" date="2013" name="Rice">
        <title>Improvement of the Oryza sativa Nipponbare reference genome using next generation sequence and optical map data.</title>
        <authorList>
            <person name="Kawahara Y."/>
            <person name="de la Bastide M."/>
            <person name="Hamilton J.P."/>
            <person name="Kanamori H."/>
            <person name="McCombie W.R."/>
            <person name="Ouyang S."/>
            <person name="Schwartz D.C."/>
            <person name="Tanaka T."/>
            <person name="Wu J."/>
            <person name="Zhou S."/>
            <person name="Childs K.L."/>
            <person name="Davidson R.M."/>
            <person name="Lin H."/>
            <person name="Quesada-Ocampo L."/>
            <person name="Vaillancourt B."/>
            <person name="Sakai H."/>
            <person name="Lee S.S."/>
            <person name="Kim J."/>
            <person name="Numa H."/>
            <person name="Itoh T."/>
            <person name="Buell C.R."/>
            <person name="Matsumoto T."/>
        </authorList>
    </citation>
    <scope>GENOME REANNOTATION</scope>
    <source>
        <strain>cv. Nipponbare</strain>
    </source>
</reference>
<reference key="5">
    <citation type="journal article" date="2005" name="PLoS Biol.">
        <title>The genomes of Oryza sativa: a history of duplications.</title>
        <authorList>
            <person name="Yu J."/>
            <person name="Wang J."/>
            <person name="Lin W."/>
            <person name="Li S."/>
            <person name="Li H."/>
            <person name="Zhou J."/>
            <person name="Ni P."/>
            <person name="Dong W."/>
            <person name="Hu S."/>
            <person name="Zeng C."/>
            <person name="Zhang J."/>
            <person name="Zhang Y."/>
            <person name="Li R."/>
            <person name="Xu Z."/>
            <person name="Li S."/>
            <person name="Li X."/>
            <person name="Zheng H."/>
            <person name="Cong L."/>
            <person name="Lin L."/>
            <person name="Yin J."/>
            <person name="Geng J."/>
            <person name="Li G."/>
            <person name="Shi J."/>
            <person name="Liu J."/>
            <person name="Lv H."/>
            <person name="Li J."/>
            <person name="Wang J."/>
            <person name="Deng Y."/>
            <person name="Ran L."/>
            <person name="Shi X."/>
            <person name="Wang X."/>
            <person name="Wu Q."/>
            <person name="Li C."/>
            <person name="Ren X."/>
            <person name="Wang J."/>
            <person name="Wang X."/>
            <person name="Li D."/>
            <person name="Liu D."/>
            <person name="Zhang X."/>
            <person name="Ji Z."/>
            <person name="Zhao W."/>
            <person name="Sun Y."/>
            <person name="Zhang Z."/>
            <person name="Bao J."/>
            <person name="Han Y."/>
            <person name="Dong L."/>
            <person name="Ji J."/>
            <person name="Chen P."/>
            <person name="Wu S."/>
            <person name="Liu J."/>
            <person name="Xiao Y."/>
            <person name="Bu D."/>
            <person name="Tan J."/>
            <person name="Yang L."/>
            <person name="Ye C."/>
            <person name="Zhang J."/>
            <person name="Xu J."/>
            <person name="Zhou Y."/>
            <person name="Yu Y."/>
            <person name="Zhang B."/>
            <person name="Zhuang S."/>
            <person name="Wei H."/>
            <person name="Liu B."/>
            <person name="Lei M."/>
            <person name="Yu H."/>
            <person name="Li Y."/>
            <person name="Xu H."/>
            <person name="Wei S."/>
            <person name="He X."/>
            <person name="Fang L."/>
            <person name="Zhang Z."/>
            <person name="Zhang Y."/>
            <person name="Huang X."/>
            <person name="Su Z."/>
            <person name="Tong W."/>
            <person name="Li J."/>
            <person name="Tong Z."/>
            <person name="Li S."/>
            <person name="Ye J."/>
            <person name="Wang L."/>
            <person name="Fang L."/>
            <person name="Lei T."/>
            <person name="Chen C.-S."/>
            <person name="Chen H.-C."/>
            <person name="Xu Z."/>
            <person name="Li H."/>
            <person name="Huang H."/>
            <person name="Zhang F."/>
            <person name="Xu H."/>
            <person name="Li N."/>
            <person name="Zhao C."/>
            <person name="Li S."/>
            <person name="Dong L."/>
            <person name="Huang Y."/>
            <person name="Li L."/>
            <person name="Xi Y."/>
            <person name="Qi Q."/>
            <person name="Li W."/>
            <person name="Zhang B."/>
            <person name="Hu W."/>
            <person name="Zhang Y."/>
            <person name="Tian X."/>
            <person name="Jiao Y."/>
            <person name="Liang X."/>
            <person name="Jin J."/>
            <person name="Gao L."/>
            <person name="Zheng W."/>
            <person name="Hao B."/>
            <person name="Liu S.-M."/>
            <person name="Wang W."/>
            <person name="Yuan L."/>
            <person name="Cao M."/>
            <person name="McDermott J."/>
            <person name="Samudrala R."/>
            <person name="Wang J."/>
            <person name="Wong G.K.-S."/>
            <person name="Yang H."/>
        </authorList>
    </citation>
    <scope>NUCLEOTIDE SEQUENCE [LARGE SCALE GENOMIC DNA]</scope>
    <source>
        <strain>cv. Nipponbare</strain>
    </source>
</reference>
<reference key="6">
    <citation type="journal article" date="2003" name="Science">
        <title>Collection, mapping, and annotation of over 28,000 cDNA clones from japonica rice.</title>
        <authorList>
            <consortium name="The rice full-length cDNA consortium"/>
        </authorList>
    </citation>
    <scope>NUCLEOTIDE SEQUENCE [LARGE SCALE MRNA]</scope>
    <source>
        <strain>cv. Nipponbare</strain>
    </source>
</reference>
<protein>
    <recommendedName>
        <fullName evidence="6">Pyruvate kinase 2, cytosolic</fullName>
        <shortName evidence="6">OsPK2</shortName>
        <ecNumber evidence="6">2.7.1.40</ecNumber>
    </recommendedName>
</protein>
<name>KPYC2_ORYSJ</name>